<protein>
    <recommendedName>
        <fullName evidence="1">Biotin synthase</fullName>
        <ecNumber evidence="1">2.8.1.6</ecNumber>
    </recommendedName>
</protein>
<sequence>MTTYNLRLKAKSELTPHPTAQYWRKCQVEELFEMPFMELIFKAAQVHREHFDPQAIQLSTLLSIKTGGCPEECEYCPQSARYDTGLEKQVMMDVEEIVEKAKIAKARGASRFCMGAAWRGPKPKDIKVVSEIIGVVKALGLETCGTFGLLEDGMAEDLKQAGLDYYNHNLDTDPERYNKIVHTRNHDDRMDTLGKVRHAGLKVCCGGIVGMNETRPERAGLIASLANLDPQPESVPINQLIKVEGTPLENAEDLDWTEFVRTIAVARITMPKSYVRLSAGRTSMPEAMQTLCFMAGANSIFYGEKLLTTCNPEEDSDRLLMDKLDLYPLAYEPSDA</sequence>
<gene>
    <name evidence="1" type="primary">bioB</name>
    <name type="ordered locus">APP7_0118</name>
</gene>
<organism>
    <name type="scientific">Actinobacillus pleuropneumoniae serotype 7 (strain AP76)</name>
    <dbReference type="NCBI Taxonomy" id="537457"/>
    <lineage>
        <taxon>Bacteria</taxon>
        <taxon>Pseudomonadati</taxon>
        <taxon>Pseudomonadota</taxon>
        <taxon>Gammaproteobacteria</taxon>
        <taxon>Pasteurellales</taxon>
        <taxon>Pasteurellaceae</taxon>
        <taxon>Actinobacillus</taxon>
    </lineage>
</organism>
<proteinExistence type="inferred from homology"/>
<evidence type="ECO:0000255" key="1">
    <source>
        <dbReference type="HAMAP-Rule" id="MF_01694"/>
    </source>
</evidence>
<evidence type="ECO:0000255" key="2">
    <source>
        <dbReference type="PROSITE-ProRule" id="PRU01266"/>
    </source>
</evidence>
<reference key="1">
    <citation type="submission" date="2008-06" db="EMBL/GenBank/DDBJ databases">
        <title>Genome and proteome analysis of A. pleuropneumoniae serotype 7.</title>
        <authorList>
            <person name="Linke B."/>
            <person name="Buettner F."/>
            <person name="Martinez-Arias R."/>
            <person name="Goesmann A."/>
            <person name="Baltes N."/>
            <person name="Tegetmeyer H."/>
            <person name="Singh M."/>
            <person name="Gerlach G.F."/>
        </authorList>
    </citation>
    <scope>NUCLEOTIDE SEQUENCE [LARGE SCALE GENOMIC DNA]</scope>
    <source>
        <strain>AP76</strain>
    </source>
</reference>
<accession>B3GZV8</accession>
<name>BIOB_ACTP7</name>
<comment type="function">
    <text evidence="1">Catalyzes the conversion of dethiobiotin (DTB) to biotin by the insertion of a sulfur atom into dethiobiotin via a radical-based mechanism.</text>
</comment>
<comment type="catalytic activity">
    <reaction evidence="1">
        <text>(4R,5S)-dethiobiotin + (sulfur carrier)-SH + 2 reduced [2Fe-2S]-[ferredoxin] + 2 S-adenosyl-L-methionine = (sulfur carrier)-H + biotin + 2 5'-deoxyadenosine + 2 L-methionine + 2 oxidized [2Fe-2S]-[ferredoxin]</text>
        <dbReference type="Rhea" id="RHEA:22060"/>
        <dbReference type="Rhea" id="RHEA-COMP:10000"/>
        <dbReference type="Rhea" id="RHEA-COMP:10001"/>
        <dbReference type="Rhea" id="RHEA-COMP:14737"/>
        <dbReference type="Rhea" id="RHEA-COMP:14739"/>
        <dbReference type="ChEBI" id="CHEBI:17319"/>
        <dbReference type="ChEBI" id="CHEBI:29917"/>
        <dbReference type="ChEBI" id="CHEBI:33737"/>
        <dbReference type="ChEBI" id="CHEBI:33738"/>
        <dbReference type="ChEBI" id="CHEBI:57586"/>
        <dbReference type="ChEBI" id="CHEBI:57844"/>
        <dbReference type="ChEBI" id="CHEBI:59789"/>
        <dbReference type="ChEBI" id="CHEBI:64428"/>
        <dbReference type="ChEBI" id="CHEBI:149473"/>
        <dbReference type="EC" id="2.8.1.6"/>
    </reaction>
</comment>
<comment type="cofactor">
    <cofactor evidence="1">
        <name>[4Fe-4S] cluster</name>
        <dbReference type="ChEBI" id="CHEBI:49883"/>
    </cofactor>
    <text evidence="1">Binds 1 [4Fe-4S] cluster. The cluster is coordinated with 3 cysteines and an exchangeable S-adenosyl-L-methionine.</text>
</comment>
<comment type="cofactor">
    <cofactor evidence="1">
        <name>[2Fe-2S] cluster</name>
        <dbReference type="ChEBI" id="CHEBI:190135"/>
    </cofactor>
    <text evidence="1">Binds 1 [2Fe-2S] cluster. The cluster is coordinated with 3 cysteines and 1 arginine.</text>
</comment>
<comment type="pathway">
    <text evidence="1">Cofactor biosynthesis; biotin biosynthesis; biotin from 7,8-diaminononanoate: step 2/2.</text>
</comment>
<comment type="subunit">
    <text evidence="1">Homodimer.</text>
</comment>
<comment type="similarity">
    <text evidence="1">Belongs to the radical SAM superfamily. Biotin synthase family.</text>
</comment>
<dbReference type="EC" id="2.8.1.6" evidence="1"/>
<dbReference type="EMBL" id="CP001091">
    <property type="protein sequence ID" value="ACE60770.1"/>
    <property type="molecule type" value="Genomic_DNA"/>
</dbReference>
<dbReference type="RefSeq" id="WP_005595801.1">
    <property type="nucleotide sequence ID" value="NC_010939.1"/>
</dbReference>
<dbReference type="SMR" id="B3GZV8"/>
<dbReference type="GeneID" id="48598264"/>
<dbReference type="KEGG" id="apa:APP7_0118"/>
<dbReference type="HOGENOM" id="CLU_033172_1_2_6"/>
<dbReference type="UniPathway" id="UPA00078">
    <property type="reaction ID" value="UER00162"/>
</dbReference>
<dbReference type="Proteomes" id="UP000001226">
    <property type="component" value="Chromosome"/>
</dbReference>
<dbReference type="GO" id="GO:0051537">
    <property type="term" value="F:2 iron, 2 sulfur cluster binding"/>
    <property type="evidence" value="ECO:0007669"/>
    <property type="project" value="UniProtKB-KW"/>
</dbReference>
<dbReference type="GO" id="GO:0051539">
    <property type="term" value="F:4 iron, 4 sulfur cluster binding"/>
    <property type="evidence" value="ECO:0007669"/>
    <property type="project" value="UniProtKB-KW"/>
</dbReference>
<dbReference type="GO" id="GO:0004076">
    <property type="term" value="F:biotin synthase activity"/>
    <property type="evidence" value="ECO:0007669"/>
    <property type="project" value="UniProtKB-UniRule"/>
</dbReference>
<dbReference type="GO" id="GO:0005506">
    <property type="term" value="F:iron ion binding"/>
    <property type="evidence" value="ECO:0007669"/>
    <property type="project" value="UniProtKB-UniRule"/>
</dbReference>
<dbReference type="GO" id="GO:0009102">
    <property type="term" value="P:biotin biosynthetic process"/>
    <property type="evidence" value="ECO:0007669"/>
    <property type="project" value="UniProtKB-UniRule"/>
</dbReference>
<dbReference type="CDD" id="cd01335">
    <property type="entry name" value="Radical_SAM"/>
    <property type="match status" value="1"/>
</dbReference>
<dbReference type="FunFam" id="3.20.20.70:FF:000011">
    <property type="entry name" value="Biotin synthase"/>
    <property type="match status" value="1"/>
</dbReference>
<dbReference type="Gene3D" id="3.20.20.70">
    <property type="entry name" value="Aldolase class I"/>
    <property type="match status" value="1"/>
</dbReference>
<dbReference type="HAMAP" id="MF_01694">
    <property type="entry name" value="BioB"/>
    <property type="match status" value="1"/>
</dbReference>
<dbReference type="InterPro" id="IPR013785">
    <property type="entry name" value="Aldolase_TIM"/>
</dbReference>
<dbReference type="InterPro" id="IPR010722">
    <property type="entry name" value="BATS_dom"/>
</dbReference>
<dbReference type="InterPro" id="IPR002684">
    <property type="entry name" value="Biotin_synth/BioAB"/>
</dbReference>
<dbReference type="InterPro" id="IPR024177">
    <property type="entry name" value="Biotin_synthase"/>
</dbReference>
<dbReference type="InterPro" id="IPR006638">
    <property type="entry name" value="Elp3/MiaA/NifB-like_rSAM"/>
</dbReference>
<dbReference type="InterPro" id="IPR007197">
    <property type="entry name" value="rSAM"/>
</dbReference>
<dbReference type="NCBIfam" id="TIGR00433">
    <property type="entry name" value="bioB"/>
    <property type="match status" value="1"/>
</dbReference>
<dbReference type="PANTHER" id="PTHR22976">
    <property type="entry name" value="BIOTIN SYNTHASE"/>
    <property type="match status" value="1"/>
</dbReference>
<dbReference type="PANTHER" id="PTHR22976:SF2">
    <property type="entry name" value="BIOTIN SYNTHASE, MITOCHONDRIAL"/>
    <property type="match status" value="1"/>
</dbReference>
<dbReference type="Pfam" id="PF06968">
    <property type="entry name" value="BATS"/>
    <property type="match status" value="1"/>
</dbReference>
<dbReference type="Pfam" id="PF04055">
    <property type="entry name" value="Radical_SAM"/>
    <property type="match status" value="1"/>
</dbReference>
<dbReference type="PIRSF" id="PIRSF001619">
    <property type="entry name" value="Biotin_synth"/>
    <property type="match status" value="1"/>
</dbReference>
<dbReference type="SFLD" id="SFLDF00272">
    <property type="entry name" value="biotin_synthase"/>
    <property type="match status" value="1"/>
</dbReference>
<dbReference type="SFLD" id="SFLDG01278">
    <property type="entry name" value="biotin_synthase_like"/>
    <property type="match status" value="1"/>
</dbReference>
<dbReference type="SMART" id="SM00876">
    <property type="entry name" value="BATS"/>
    <property type="match status" value="1"/>
</dbReference>
<dbReference type="SMART" id="SM00729">
    <property type="entry name" value="Elp3"/>
    <property type="match status" value="1"/>
</dbReference>
<dbReference type="SUPFAM" id="SSF102114">
    <property type="entry name" value="Radical SAM enzymes"/>
    <property type="match status" value="1"/>
</dbReference>
<dbReference type="PROSITE" id="PS51918">
    <property type="entry name" value="RADICAL_SAM"/>
    <property type="match status" value="1"/>
</dbReference>
<keyword id="KW-0001">2Fe-2S</keyword>
<keyword id="KW-0004">4Fe-4S</keyword>
<keyword id="KW-0093">Biotin biosynthesis</keyword>
<keyword id="KW-0408">Iron</keyword>
<keyword id="KW-0411">Iron-sulfur</keyword>
<keyword id="KW-0479">Metal-binding</keyword>
<keyword id="KW-0949">S-adenosyl-L-methionine</keyword>
<keyword id="KW-0808">Transferase</keyword>
<feature type="chain" id="PRO_0000381181" description="Biotin synthase">
    <location>
        <begin position="1"/>
        <end position="336"/>
    </location>
</feature>
<feature type="domain" description="Radical SAM core" evidence="2">
    <location>
        <begin position="54"/>
        <end position="281"/>
    </location>
</feature>
<feature type="binding site" evidence="1">
    <location>
        <position position="69"/>
    </location>
    <ligand>
        <name>[4Fe-4S] cluster</name>
        <dbReference type="ChEBI" id="CHEBI:49883"/>
        <note>4Fe-4S-S-AdoMet</note>
    </ligand>
</feature>
<feature type="binding site" evidence="1">
    <location>
        <position position="73"/>
    </location>
    <ligand>
        <name>[4Fe-4S] cluster</name>
        <dbReference type="ChEBI" id="CHEBI:49883"/>
        <note>4Fe-4S-S-AdoMet</note>
    </ligand>
</feature>
<feature type="binding site" evidence="1">
    <location>
        <position position="76"/>
    </location>
    <ligand>
        <name>[4Fe-4S] cluster</name>
        <dbReference type="ChEBI" id="CHEBI:49883"/>
        <note>4Fe-4S-S-AdoMet</note>
    </ligand>
</feature>
<feature type="binding site" evidence="1">
    <location>
        <position position="113"/>
    </location>
    <ligand>
        <name>[2Fe-2S] cluster</name>
        <dbReference type="ChEBI" id="CHEBI:190135"/>
    </ligand>
</feature>
<feature type="binding site" evidence="1">
    <location>
        <position position="144"/>
    </location>
    <ligand>
        <name>[2Fe-2S] cluster</name>
        <dbReference type="ChEBI" id="CHEBI:190135"/>
    </ligand>
</feature>
<feature type="binding site" evidence="1">
    <location>
        <position position="204"/>
    </location>
    <ligand>
        <name>[2Fe-2S] cluster</name>
        <dbReference type="ChEBI" id="CHEBI:190135"/>
    </ligand>
</feature>
<feature type="binding site" evidence="1">
    <location>
        <position position="276"/>
    </location>
    <ligand>
        <name>[2Fe-2S] cluster</name>
        <dbReference type="ChEBI" id="CHEBI:190135"/>
    </ligand>
</feature>